<protein>
    <recommendedName>
        <fullName evidence="1">UDP-N-acetylglucosamine 1-carboxyvinyltransferase</fullName>
        <ecNumber evidence="1">2.5.1.7</ecNumber>
    </recommendedName>
    <alternativeName>
        <fullName evidence="1">Enoylpyruvate transferase</fullName>
    </alternativeName>
    <alternativeName>
        <fullName evidence="1">UDP-N-acetylglucosamine enolpyruvyl transferase</fullName>
        <shortName evidence="1">EPT</shortName>
    </alternativeName>
</protein>
<name>MURA_ANAMM</name>
<evidence type="ECO:0000255" key="1">
    <source>
        <dbReference type="HAMAP-Rule" id="MF_00111"/>
    </source>
</evidence>
<organism>
    <name type="scientific">Anaplasma marginale (strain St. Maries)</name>
    <dbReference type="NCBI Taxonomy" id="234826"/>
    <lineage>
        <taxon>Bacteria</taxon>
        <taxon>Pseudomonadati</taxon>
        <taxon>Pseudomonadota</taxon>
        <taxon>Alphaproteobacteria</taxon>
        <taxon>Rickettsiales</taxon>
        <taxon>Anaplasmataceae</taxon>
        <taxon>Anaplasma</taxon>
    </lineage>
</organism>
<feature type="chain" id="PRO_0000231150" description="UDP-N-acetylglucosamine 1-carboxyvinyltransferase">
    <location>
        <begin position="1"/>
        <end position="428"/>
    </location>
</feature>
<feature type="active site" description="Proton donor" evidence="1">
    <location>
        <position position="126"/>
    </location>
</feature>
<feature type="binding site" evidence="1">
    <location>
        <begin position="25"/>
        <end position="26"/>
    </location>
    <ligand>
        <name>phosphoenolpyruvate</name>
        <dbReference type="ChEBI" id="CHEBI:58702"/>
    </ligand>
</feature>
<feature type="binding site" evidence="1">
    <location>
        <position position="102"/>
    </location>
    <ligand>
        <name>UDP-N-acetyl-alpha-D-glucosamine</name>
        <dbReference type="ChEBI" id="CHEBI:57705"/>
    </ligand>
</feature>
<feature type="binding site" evidence="1">
    <location>
        <position position="316"/>
    </location>
    <ligand>
        <name>UDP-N-acetyl-alpha-D-glucosamine</name>
        <dbReference type="ChEBI" id="CHEBI:57705"/>
    </ligand>
</feature>
<feature type="binding site" evidence="1">
    <location>
        <position position="338"/>
    </location>
    <ligand>
        <name>UDP-N-acetyl-alpha-D-glucosamine</name>
        <dbReference type="ChEBI" id="CHEBI:57705"/>
    </ligand>
</feature>
<feature type="modified residue" description="2-(S-cysteinyl)pyruvic acid O-phosphothioketal" evidence="1">
    <location>
        <position position="126"/>
    </location>
</feature>
<keyword id="KW-0131">Cell cycle</keyword>
<keyword id="KW-0132">Cell division</keyword>
<keyword id="KW-0133">Cell shape</keyword>
<keyword id="KW-0961">Cell wall biogenesis/degradation</keyword>
<keyword id="KW-0963">Cytoplasm</keyword>
<keyword id="KW-0573">Peptidoglycan synthesis</keyword>
<keyword id="KW-0670">Pyruvate</keyword>
<keyword id="KW-0808">Transferase</keyword>
<sequence>MVEASLRVSGSTNPISGRIVANGAKNSALPIMAACLLLNGSVVLAGMPDLRDVTVMSELITSLGGRISFLRNTKEKANHKVEINCDNLHNWAIPHEITSQMRASCLTLGPILTRMGRAEVALPGGCSIGSRPLDMHIWALQKLGAKVEVCGNYVKCSSSGKLVGCHIDFQSVSVGATENALMAAVMAHGTTTISNAAIEPEVADLAHFLVKAGAQISGIGTRTLQICGVQQLSGPSHTIIRDRMEAGTYALAAISTGGSVHIAGVTSEILGCLAHELEGMGGKVTDVPDGLVVSRHSPQINPVVLHTAPYPGFPSDMQAQFAATACLARGTSQIHEHVFDRRFSYARELAKMGADIHVQGNTASIRGVDKLHGASVQAPDLRASAALLIAGLSAQGVTTISNAQTLYRGYEAMEEKLRACGAEVELVR</sequence>
<reference key="1">
    <citation type="journal article" date="2005" name="Proc. Natl. Acad. Sci. U.S.A.">
        <title>Complete genome sequencing of Anaplasma marginale reveals that the surface is skewed to two superfamilies of outer membrane proteins.</title>
        <authorList>
            <person name="Brayton K.A."/>
            <person name="Kappmeyer L.S."/>
            <person name="Herndon D.R."/>
            <person name="Dark M.J."/>
            <person name="Tibbals D.L."/>
            <person name="Palmer G.H."/>
            <person name="McGuire T.C."/>
            <person name="Knowles D.P. Jr."/>
        </authorList>
    </citation>
    <scope>NUCLEOTIDE SEQUENCE [LARGE SCALE GENOMIC DNA]</scope>
    <source>
        <strain>St. Maries</strain>
    </source>
</reference>
<dbReference type="EC" id="2.5.1.7" evidence="1"/>
<dbReference type="EMBL" id="CP000030">
    <property type="protein sequence ID" value="AAV86285.1"/>
    <property type="molecule type" value="Genomic_DNA"/>
</dbReference>
<dbReference type="RefSeq" id="WP_011114136.1">
    <property type="nucleotide sequence ID" value="NZ_AFMU01000019.1"/>
</dbReference>
<dbReference type="SMR" id="Q5PBP4"/>
<dbReference type="KEGG" id="ama:AM145"/>
<dbReference type="HOGENOM" id="CLU_027387_0_0_5"/>
<dbReference type="UniPathway" id="UPA00219"/>
<dbReference type="GO" id="GO:0005737">
    <property type="term" value="C:cytoplasm"/>
    <property type="evidence" value="ECO:0007669"/>
    <property type="project" value="UniProtKB-SubCell"/>
</dbReference>
<dbReference type="GO" id="GO:0008760">
    <property type="term" value="F:UDP-N-acetylglucosamine 1-carboxyvinyltransferase activity"/>
    <property type="evidence" value="ECO:0007669"/>
    <property type="project" value="UniProtKB-UniRule"/>
</dbReference>
<dbReference type="GO" id="GO:0051301">
    <property type="term" value="P:cell division"/>
    <property type="evidence" value="ECO:0007669"/>
    <property type="project" value="UniProtKB-KW"/>
</dbReference>
<dbReference type="GO" id="GO:0071555">
    <property type="term" value="P:cell wall organization"/>
    <property type="evidence" value="ECO:0007669"/>
    <property type="project" value="UniProtKB-KW"/>
</dbReference>
<dbReference type="GO" id="GO:0009252">
    <property type="term" value="P:peptidoglycan biosynthetic process"/>
    <property type="evidence" value="ECO:0007669"/>
    <property type="project" value="UniProtKB-UniRule"/>
</dbReference>
<dbReference type="GO" id="GO:0008360">
    <property type="term" value="P:regulation of cell shape"/>
    <property type="evidence" value="ECO:0007669"/>
    <property type="project" value="UniProtKB-KW"/>
</dbReference>
<dbReference type="GO" id="GO:0019277">
    <property type="term" value="P:UDP-N-acetylgalactosamine biosynthetic process"/>
    <property type="evidence" value="ECO:0007669"/>
    <property type="project" value="InterPro"/>
</dbReference>
<dbReference type="CDD" id="cd01555">
    <property type="entry name" value="UdpNAET"/>
    <property type="match status" value="1"/>
</dbReference>
<dbReference type="Gene3D" id="3.65.10.10">
    <property type="entry name" value="Enolpyruvate transferase domain"/>
    <property type="match status" value="2"/>
</dbReference>
<dbReference type="HAMAP" id="MF_00111">
    <property type="entry name" value="MurA"/>
    <property type="match status" value="1"/>
</dbReference>
<dbReference type="InterPro" id="IPR001986">
    <property type="entry name" value="Enolpyruvate_Tfrase_dom"/>
</dbReference>
<dbReference type="InterPro" id="IPR036968">
    <property type="entry name" value="Enolpyruvate_Tfrase_sf"/>
</dbReference>
<dbReference type="InterPro" id="IPR050068">
    <property type="entry name" value="MurA_subfamily"/>
</dbReference>
<dbReference type="InterPro" id="IPR013792">
    <property type="entry name" value="RNA3'P_cycl/enolpyr_Trfase_a/b"/>
</dbReference>
<dbReference type="InterPro" id="IPR005750">
    <property type="entry name" value="UDP_GlcNAc_COvinyl_MurA"/>
</dbReference>
<dbReference type="NCBIfam" id="TIGR01072">
    <property type="entry name" value="murA"/>
    <property type="match status" value="1"/>
</dbReference>
<dbReference type="NCBIfam" id="NF006873">
    <property type="entry name" value="PRK09369.1"/>
    <property type="match status" value="1"/>
</dbReference>
<dbReference type="PANTHER" id="PTHR43783">
    <property type="entry name" value="UDP-N-ACETYLGLUCOSAMINE 1-CARBOXYVINYLTRANSFERASE"/>
    <property type="match status" value="1"/>
</dbReference>
<dbReference type="PANTHER" id="PTHR43783:SF1">
    <property type="entry name" value="UDP-N-ACETYLGLUCOSAMINE 1-CARBOXYVINYLTRANSFERASE"/>
    <property type="match status" value="1"/>
</dbReference>
<dbReference type="Pfam" id="PF00275">
    <property type="entry name" value="EPSP_synthase"/>
    <property type="match status" value="1"/>
</dbReference>
<dbReference type="SUPFAM" id="SSF55205">
    <property type="entry name" value="EPT/RTPC-like"/>
    <property type="match status" value="1"/>
</dbReference>
<comment type="function">
    <text evidence="1">Cell wall formation. Adds enolpyruvyl to UDP-N-acetylglucosamine.</text>
</comment>
<comment type="catalytic activity">
    <reaction evidence="1">
        <text>phosphoenolpyruvate + UDP-N-acetyl-alpha-D-glucosamine = UDP-N-acetyl-3-O-(1-carboxyvinyl)-alpha-D-glucosamine + phosphate</text>
        <dbReference type="Rhea" id="RHEA:18681"/>
        <dbReference type="ChEBI" id="CHEBI:43474"/>
        <dbReference type="ChEBI" id="CHEBI:57705"/>
        <dbReference type="ChEBI" id="CHEBI:58702"/>
        <dbReference type="ChEBI" id="CHEBI:68483"/>
        <dbReference type="EC" id="2.5.1.7"/>
    </reaction>
</comment>
<comment type="pathway">
    <text evidence="1">Cell wall biogenesis; peptidoglycan biosynthesis.</text>
</comment>
<comment type="subcellular location">
    <subcellularLocation>
        <location evidence="1">Cytoplasm</location>
    </subcellularLocation>
</comment>
<comment type="similarity">
    <text evidence="1">Belongs to the EPSP synthase family. MurA subfamily.</text>
</comment>
<proteinExistence type="inferred from homology"/>
<accession>Q5PBP4</accession>
<gene>
    <name evidence="1" type="primary">murA</name>
    <name type="ordered locus">AM145</name>
</gene>